<sequence>MIWHVQNENFILDSTRIFMKAFHLLLFDGSLIFPECILIFGLILLLMIDSTSDQKDLPWFYFISSTSLVMSITALLFRWREEPMISFSGNFQTNNFNEIFQFLILLCSTLCIPLSVEYIECTEMAITEFLLFVLTATLGGMFLCGANDLITIFVAPECFSFCSYLLSGYTKKDVRSNEATMKYLLMGGASSSILVHAFSWLYGSSGGEIELQEIVNGLINTQMYNSPGISIALLFITVGIGFKLSPAPSHQWTPDVYEGSPTPVVAFLSVTSKVAASASATRIFDIPFYFSSNEWHLLLEILAILSMILGNIIAITQTSMKRMLAYSSIGQIGYVIIGIIVGDSNDGYASMITYMLFYISMNLGTFACIVLFGLRTGTDNIRDYAGLYTKDPFLALSLALCLLSLGGLPPLAGFFGKLYLFRCGWQAGLYSLVLIGLLTSVVSIYYYLKIIKLLMTGRNQEITPHVRNYRRSPLRSNNSIELSMIVCVIASTIPGISMNPIIAIAQDTLF</sequence>
<accession>P0CC79</accession>
<accession>Q06R70</accession>
<reference key="1">
    <citation type="journal article" date="2007" name="Mol. Biol. Evol.">
        <title>Gene relocations within chloroplast genomes of Jasminum and Menodora (Oleaceae) are due to multiple, overlapping inversions.</title>
        <authorList>
            <person name="Lee H.-L."/>
            <person name="Jansen R.K."/>
            <person name="Chumley T.W."/>
            <person name="Kim K.-J."/>
        </authorList>
    </citation>
    <scope>NUCLEOTIDE SEQUENCE [LARGE SCALE GENOMIC DNA]</scope>
</reference>
<name>NU2C2_JASNU</name>
<feature type="chain" id="PRO_0000391277" description="NAD(P)H-quinone oxidoreductase subunit 2 B, chloroplastic">
    <location>
        <begin position="1"/>
        <end position="510"/>
    </location>
</feature>
<feature type="transmembrane region" description="Helical" evidence="1">
    <location>
        <begin position="24"/>
        <end position="44"/>
    </location>
</feature>
<feature type="transmembrane region" description="Helical" evidence="1">
    <location>
        <begin position="57"/>
        <end position="77"/>
    </location>
</feature>
<feature type="transmembrane region" description="Helical" evidence="1">
    <location>
        <begin position="99"/>
        <end position="119"/>
    </location>
</feature>
<feature type="transmembrane region" description="Helical" evidence="1">
    <location>
        <begin position="124"/>
        <end position="144"/>
    </location>
</feature>
<feature type="transmembrane region" description="Helical" evidence="1">
    <location>
        <begin position="149"/>
        <end position="169"/>
    </location>
</feature>
<feature type="transmembrane region" description="Helical" evidence="1">
    <location>
        <begin position="183"/>
        <end position="203"/>
    </location>
</feature>
<feature type="transmembrane region" description="Helical" evidence="1">
    <location>
        <begin position="227"/>
        <end position="247"/>
    </location>
</feature>
<feature type="transmembrane region" description="Helical" evidence="1">
    <location>
        <begin position="295"/>
        <end position="315"/>
    </location>
</feature>
<feature type="transmembrane region" description="Helical" evidence="1">
    <location>
        <begin position="323"/>
        <end position="343"/>
    </location>
</feature>
<feature type="transmembrane region" description="Helical" evidence="1">
    <location>
        <begin position="354"/>
        <end position="374"/>
    </location>
</feature>
<feature type="transmembrane region" description="Helical" evidence="1">
    <location>
        <begin position="395"/>
        <end position="415"/>
    </location>
</feature>
<feature type="transmembrane region" description="Helical" evidence="1">
    <location>
        <begin position="428"/>
        <end position="448"/>
    </location>
</feature>
<feature type="transmembrane region" description="Helical" evidence="1">
    <location>
        <begin position="484"/>
        <end position="504"/>
    </location>
</feature>
<protein>
    <recommendedName>
        <fullName evidence="1">NAD(P)H-quinone oxidoreductase subunit 2 B, chloroplastic</fullName>
        <ecNumber evidence="1">7.1.1.-</ecNumber>
    </recommendedName>
    <alternativeName>
        <fullName evidence="1">NAD(P)H dehydrogenase, subunit 2 B</fullName>
    </alternativeName>
    <alternativeName>
        <fullName evidence="1">NADH-plastoquinone oxidoreductase subunit 2 B</fullName>
    </alternativeName>
</protein>
<geneLocation type="chloroplast"/>
<comment type="function">
    <text evidence="1">NDH shuttles electrons from NAD(P)H:plastoquinone, via FMN and iron-sulfur (Fe-S) centers, to quinones in the photosynthetic chain and possibly in a chloroplast respiratory chain. The immediate electron acceptor for the enzyme in this species is believed to be plastoquinone. Couples the redox reaction to proton translocation, and thus conserves the redox energy in a proton gradient.</text>
</comment>
<comment type="catalytic activity">
    <reaction evidence="1">
        <text>a plastoquinone + NADH + (n+1) H(+)(in) = a plastoquinol + NAD(+) + n H(+)(out)</text>
        <dbReference type="Rhea" id="RHEA:42608"/>
        <dbReference type="Rhea" id="RHEA-COMP:9561"/>
        <dbReference type="Rhea" id="RHEA-COMP:9562"/>
        <dbReference type="ChEBI" id="CHEBI:15378"/>
        <dbReference type="ChEBI" id="CHEBI:17757"/>
        <dbReference type="ChEBI" id="CHEBI:57540"/>
        <dbReference type="ChEBI" id="CHEBI:57945"/>
        <dbReference type="ChEBI" id="CHEBI:62192"/>
    </reaction>
</comment>
<comment type="catalytic activity">
    <reaction evidence="1">
        <text>a plastoquinone + NADPH + (n+1) H(+)(in) = a plastoquinol + NADP(+) + n H(+)(out)</text>
        <dbReference type="Rhea" id="RHEA:42612"/>
        <dbReference type="Rhea" id="RHEA-COMP:9561"/>
        <dbReference type="Rhea" id="RHEA-COMP:9562"/>
        <dbReference type="ChEBI" id="CHEBI:15378"/>
        <dbReference type="ChEBI" id="CHEBI:17757"/>
        <dbReference type="ChEBI" id="CHEBI:57783"/>
        <dbReference type="ChEBI" id="CHEBI:58349"/>
        <dbReference type="ChEBI" id="CHEBI:62192"/>
    </reaction>
</comment>
<comment type="subunit">
    <text evidence="1">NDH is composed of at least 16 different subunits, 5 of which are encoded in the nucleus.</text>
</comment>
<comment type="subcellular location">
    <subcellularLocation>
        <location evidence="1">Plastid</location>
        <location evidence="1">Chloroplast thylakoid membrane</location>
        <topology evidence="1">Multi-pass membrane protein</topology>
    </subcellularLocation>
</comment>
<comment type="similarity">
    <text evidence="1">Belongs to the complex I subunit 2 family.</text>
</comment>
<organism>
    <name type="scientific">Jasminum nudiflorum</name>
    <name type="common">Winter jasmine</name>
    <dbReference type="NCBI Taxonomy" id="126431"/>
    <lineage>
        <taxon>Eukaryota</taxon>
        <taxon>Viridiplantae</taxon>
        <taxon>Streptophyta</taxon>
        <taxon>Embryophyta</taxon>
        <taxon>Tracheophyta</taxon>
        <taxon>Spermatophyta</taxon>
        <taxon>Magnoliopsida</taxon>
        <taxon>eudicotyledons</taxon>
        <taxon>Gunneridae</taxon>
        <taxon>Pentapetalae</taxon>
        <taxon>asterids</taxon>
        <taxon>lamiids</taxon>
        <taxon>Lamiales</taxon>
        <taxon>Oleaceae</taxon>
        <taxon>Jasmineae</taxon>
        <taxon>Jasminum</taxon>
    </lineage>
</organism>
<dbReference type="EC" id="7.1.1.-" evidence="1"/>
<dbReference type="EMBL" id="DQ673255">
    <property type="protein sequence ID" value="ABG74690.1"/>
    <property type="molecule type" value="Genomic_DNA"/>
</dbReference>
<dbReference type="SMR" id="P0CC79"/>
<dbReference type="GO" id="GO:0009535">
    <property type="term" value="C:chloroplast thylakoid membrane"/>
    <property type="evidence" value="ECO:0007669"/>
    <property type="project" value="UniProtKB-SubCell"/>
</dbReference>
<dbReference type="GO" id="GO:0008137">
    <property type="term" value="F:NADH dehydrogenase (ubiquinone) activity"/>
    <property type="evidence" value="ECO:0007669"/>
    <property type="project" value="InterPro"/>
</dbReference>
<dbReference type="GO" id="GO:0048038">
    <property type="term" value="F:quinone binding"/>
    <property type="evidence" value="ECO:0007669"/>
    <property type="project" value="UniProtKB-KW"/>
</dbReference>
<dbReference type="GO" id="GO:0042773">
    <property type="term" value="P:ATP synthesis coupled electron transport"/>
    <property type="evidence" value="ECO:0007669"/>
    <property type="project" value="InterPro"/>
</dbReference>
<dbReference type="GO" id="GO:0019684">
    <property type="term" value="P:photosynthesis, light reaction"/>
    <property type="evidence" value="ECO:0007669"/>
    <property type="project" value="UniProtKB-UniRule"/>
</dbReference>
<dbReference type="HAMAP" id="MF_00445">
    <property type="entry name" value="NDH1_NuoN_1"/>
    <property type="match status" value="1"/>
</dbReference>
<dbReference type="InterPro" id="IPR010096">
    <property type="entry name" value="NADH-Q_OxRdtase_suN/2"/>
</dbReference>
<dbReference type="InterPro" id="IPR001750">
    <property type="entry name" value="ND/Mrp_TM"/>
</dbReference>
<dbReference type="InterPro" id="IPR045693">
    <property type="entry name" value="Ndh2_N"/>
</dbReference>
<dbReference type="NCBIfam" id="TIGR01770">
    <property type="entry name" value="NDH_I_N"/>
    <property type="match status" value="1"/>
</dbReference>
<dbReference type="NCBIfam" id="NF002701">
    <property type="entry name" value="PRK02504.1"/>
    <property type="match status" value="1"/>
</dbReference>
<dbReference type="PANTHER" id="PTHR22773">
    <property type="entry name" value="NADH DEHYDROGENASE"/>
    <property type="match status" value="1"/>
</dbReference>
<dbReference type="Pfam" id="PF19530">
    <property type="entry name" value="Ndh2_N"/>
    <property type="match status" value="1"/>
</dbReference>
<dbReference type="Pfam" id="PF00361">
    <property type="entry name" value="Proton_antipo_M"/>
    <property type="match status" value="1"/>
</dbReference>
<dbReference type="PRINTS" id="PR01434">
    <property type="entry name" value="NADHDHGNASE5"/>
</dbReference>
<evidence type="ECO:0000255" key="1">
    <source>
        <dbReference type="HAMAP-Rule" id="MF_00445"/>
    </source>
</evidence>
<proteinExistence type="inferred from homology"/>
<keyword id="KW-0150">Chloroplast</keyword>
<keyword id="KW-0472">Membrane</keyword>
<keyword id="KW-0520">NAD</keyword>
<keyword id="KW-0521">NADP</keyword>
<keyword id="KW-0934">Plastid</keyword>
<keyword id="KW-0618">Plastoquinone</keyword>
<keyword id="KW-0874">Quinone</keyword>
<keyword id="KW-0793">Thylakoid</keyword>
<keyword id="KW-1278">Translocase</keyword>
<keyword id="KW-0812">Transmembrane</keyword>
<keyword id="KW-1133">Transmembrane helix</keyword>
<keyword id="KW-0813">Transport</keyword>
<gene>
    <name evidence="1" type="primary">ndhB2</name>
    <name type="ORF">JNC1533</name>
</gene>